<keyword id="KW-0574">Periplasm</keyword>
<keyword id="KW-1185">Reference proteome</keyword>
<keyword id="KW-0732">Signal</keyword>
<accession>P76076</accession>
<accession>Q2MBD5</accession>
<protein>
    <recommendedName>
        <fullName evidence="3">Probable chaperone-like protein YdbL</fullName>
    </recommendedName>
</protein>
<evidence type="ECO:0000255" key="1"/>
<evidence type="ECO:0000269" key="2">
    <source>
    </source>
</evidence>
<evidence type="ECO:0000305" key="3"/>
<evidence type="ECO:0000305" key="4">
    <source>
    </source>
</evidence>
<dbReference type="EMBL" id="U00096">
    <property type="protein sequence ID" value="AAC74465.2"/>
    <property type="molecule type" value="Genomic_DNA"/>
</dbReference>
<dbReference type="EMBL" id="AP009048">
    <property type="protein sequence ID" value="BAE76421.1"/>
    <property type="molecule type" value="Genomic_DNA"/>
</dbReference>
<dbReference type="PIR" id="B64889">
    <property type="entry name" value="B64889"/>
</dbReference>
<dbReference type="RefSeq" id="NP_415901.2">
    <property type="nucleotide sequence ID" value="NC_000913.3"/>
</dbReference>
<dbReference type="RefSeq" id="WP_001300734.1">
    <property type="nucleotide sequence ID" value="NZ_SSZK01000012.1"/>
</dbReference>
<dbReference type="SMR" id="P76076"/>
<dbReference type="BioGRID" id="4259651">
    <property type="interactions" value="18"/>
</dbReference>
<dbReference type="FunCoup" id="P76076">
    <property type="interactions" value="5"/>
</dbReference>
<dbReference type="STRING" id="511145.b1383"/>
<dbReference type="jPOST" id="P76076"/>
<dbReference type="PaxDb" id="511145-b1383"/>
<dbReference type="EnsemblBacteria" id="AAC74465">
    <property type="protein sequence ID" value="AAC74465"/>
    <property type="gene ID" value="b1383"/>
</dbReference>
<dbReference type="GeneID" id="945943"/>
<dbReference type="KEGG" id="ecj:JW5216"/>
<dbReference type="KEGG" id="eco:b1383"/>
<dbReference type="KEGG" id="ecoc:C3026_08080"/>
<dbReference type="PATRIC" id="fig|511145.12.peg.1446"/>
<dbReference type="EchoBASE" id="EB3497"/>
<dbReference type="eggNOG" id="COG3784">
    <property type="taxonomic scope" value="Bacteria"/>
</dbReference>
<dbReference type="HOGENOM" id="CLU_146585_1_0_6"/>
<dbReference type="InParanoid" id="P76076"/>
<dbReference type="OMA" id="QPNGYLG"/>
<dbReference type="OrthoDB" id="9798130at2"/>
<dbReference type="PhylomeDB" id="P76076"/>
<dbReference type="BioCyc" id="EcoCyc:G6705-MONOMER"/>
<dbReference type="PRO" id="PR:P76076"/>
<dbReference type="Proteomes" id="UP000000625">
    <property type="component" value="Chromosome"/>
</dbReference>
<dbReference type="InterPro" id="IPR008309">
    <property type="entry name" value="UCP025560"/>
</dbReference>
<dbReference type="Pfam" id="PF07027">
    <property type="entry name" value="DUF1318"/>
    <property type="match status" value="1"/>
</dbReference>
<dbReference type="PIRSF" id="PIRSF025560">
    <property type="entry name" value="UCP025560"/>
    <property type="match status" value="1"/>
</dbReference>
<reference key="1">
    <citation type="journal article" date="1997" name="Science">
        <title>The complete genome sequence of Escherichia coli K-12.</title>
        <authorList>
            <person name="Blattner F.R."/>
            <person name="Plunkett G. III"/>
            <person name="Bloch C.A."/>
            <person name="Perna N.T."/>
            <person name="Burland V."/>
            <person name="Riley M."/>
            <person name="Collado-Vides J."/>
            <person name="Glasner J.D."/>
            <person name="Rode C.K."/>
            <person name="Mayhew G.F."/>
            <person name="Gregor J."/>
            <person name="Davis N.W."/>
            <person name="Kirkpatrick H.A."/>
            <person name="Goeden M.A."/>
            <person name="Rose D.J."/>
            <person name="Mau B."/>
            <person name="Shao Y."/>
        </authorList>
    </citation>
    <scope>NUCLEOTIDE SEQUENCE [LARGE SCALE GENOMIC DNA]</scope>
    <source>
        <strain>K12 / MG1655 / ATCC 47076</strain>
    </source>
</reference>
<reference key="2">
    <citation type="journal article" date="2006" name="Mol. Syst. Biol.">
        <title>Highly accurate genome sequences of Escherichia coli K-12 strains MG1655 and W3110.</title>
        <authorList>
            <person name="Hayashi K."/>
            <person name="Morooka N."/>
            <person name="Yamamoto Y."/>
            <person name="Fujita K."/>
            <person name="Isono K."/>
            <person name="Choi S."/>
            <person name="Ohtsubo E."/>
            <person name="Baba T."/>
            <person name="Wanner B.L."/>
            <person name="Mori H."/>
            <person name="Horiuchi T."/>
        </authorList>
    </citation>
    <scope>NUCLEOTIDE SEQUENCE [LARGE SCALE GENOMIC DNA]</scope>
    <source>
        <strain>K12 / W3110 / ATCC 27325 / DSM 5911</strain>
    </source>
</reference>
<reference key="3">
    <citation type="journal article" date="2024" name="Proc. Natl. Acad. Sci. U.S.A.">
        <title>YdbH and YnbE form an intermembrane bridge to maintain lipid homeostasis in the outer membrane of Escherichia coli.</title>
        <authorList>
            <person name="Kumar S."/>
            <person name="Davis R.M."/>
            <person name="Ruiz N."/>
        </authorList>
    </citation>
    <scope>FUNCTION</scope>
    <scope>DISRUPTION PHENOTYPE</scope>
    <source>
        <strain>K12 / MG1655 / ATCC 47076</strain>
    </source>
</reference>
<name>YDBL_ECOLI</name>
<proteinExistence type="inferred from homology"/>
<comment type="function">
    <text evidence="2">Probably acts as a chaperone-like protein that contributes to, but is not required for, the formation of the YdbH-YnbE intermembrane bridge (PubMed:38748582). Affects the function and the structure of the YdbH-YnbE complex (PubMed:38748582). Overexpression of ydbL causes a negative effect on YdbH-YnbE function (PubMed:38748582).</text>
</comment>
<comment type="subcellular location">
    <subcellularLocation>
        <location evidence="4">Periplasm</location>
    </subcellularLocation>
</comment>
<comment type="disruption phenotype">
    <text evidence="2">The deletion mutant does not show any growth or outer membrane permeability defects.</text>
</comment>
<gene>
    <name type="primary">ydbL</name>
    <name type="ordered locus">b1383</name>
    <name type="ordered locus">JW5216</name>
</gene>
<sequence length="108" mass="11878">MKKTLLLCAFLVGLVSSNVMALTLDEARTQGRVGETFYGYLVALKTDAETEKLVADINAERKASYQQLAKQNNVSVDDIAKLAGQKLVARAKPGEYVQGINGKWVRKF</sequence>
<organism>
    <name type="scientific">Escherichia coli (strain K12)</name>
    <dbReference type="NCBI Taxonomy" id="83333"/>
    <lineage>
        <taxon>Bacteria</taxon>
        <taxon>Pseudomonadati</taxon>
        <taxon>Pseudomonadota</taxon>
        <taxon>Gammaproteobacteria</taxon>
        <taxon>Enterobacterales</taxon>
        <taxon>Enterobacteriaceae</taxon>
        <taxon>Escherichia</taxon>
    </lineage>
</organism>
<feature type="signal peptide" evidence="1">
    <location>
        <begin position="1"/>
        <end position="21"/>
    </location>
</feature>
<feature type="chain" id="PRO_0000013834" description="Probable chaperone-like protein YdbL">
    <location>
        <begin position="22"/>
        <end position="108"/>
    </location>
</feature>